<proteinExistence type="inferred from homology"/>
<protein>
    <recommendedName>
        <fullName evidence="1">Large ribosomal subunit protein uL29</fullName>
    </recommendedName>
    <alternativeName>
        <fullName evidence="2">50S ribosomal protein L29</fullName>
    </alternativeName>
</protein>
<reference key="1">
    <citation type="journal article" date="2003" name="Nature">
        <title>Genome divergence in two Prochlorococcus ecotypes reflects oceanic niche differentiation.</title>
        <authorList>
            <person name="Rocap G."/>
            <person name="Larimer F.W."/>
            <person name="Lamerdin J.E."/>
            <person name="Malfatti S."/>
            <person name="Chain P."/>
            <person name="Ahlgren N.A."/>
            <person name="Arellano A."/>
            <person name="Coleman M."/>
            <person name="Hauser L."/>
            <person name="Hess W.R."/>
            <person name="Johnson Z.I."/>
            <person name="Land M.L."/>
            <person name="Lindell D."/>
            <person name="Post A.F."/>
            <person name="Regala W."/>
            <person name="Shah M."/>
            <person name="Shaw S.L."/>
            <person name="Steglich C."/>
            <person name="Sullivan M.B."/>
            <person name="Ting C.S."/>
            <person name="Tolonen A."/>
            <person name="Webb E.A."/>
            <person name="Zinser E.R."/>
            <person name="Chisholm S.W."/>
        </authorList>
    </citation>
    <scope>NUCLEOTIDE SEQUENCE [LARGE SCALE GENOMIC DNA]</scope>
    <source>
        <strain>MIT 9313</strain>
    </source>
</reference>
<evidence type="ECO:0000255" key="1">
    <source>
        <dbReference type="HAMAP-Rule" id="MF_00374"/>
    </source>
</evidence>
<evidence type="ECO:0000305" key="2"/>
<feature type="chain" id="PRO_0000130435" description="Large ribosomal subunit protein uL29">
    <location>
        <begin position="1"/>
        <end position="70"/>
    </location>
</feature>
<name>RL29_PROMM</name>
<sequence>MAHPKAAEVRKLTDADITEQIDGIRRELFDLRFQQATRQLSNTHRFKEARIKLAQLLTVQKERSRSAASS</sequence>
<keyword id="KW-1185">Reference proteome</keyword>
<keyword id="KW-0687">Ribonucleoprotein</keyword>
<keyword id="KW-0689">Ribosomal protein</keyword>
<dbReference type="EMBL" id="BX548175">
    <property type="protein sequence ID" value="CAE21915.1"/>
    <property type="molecule type" value="Genomic_DNA"/>
</dbReference>
<dbReference type="RefSeq" id="WP_011131107.1">
    <property type="nucleotide sequence ID" value="NC_005071.1"/>
</dbReference>
<dbReference type="SMR" id="Q7V535"/>
<dbReference type="KEGG" id="pmt:PMT_1740"/>
<dbReference type="eggNOG" id="COG0255">
    <property type="taxonomic scope" value="Bacteria"/>
</dbReference>
<dbReference type="HOGENOM" id="CLU_158491_0_1_3"/>
<dbReference type="OrthoDB" id="9815192at2"/>
<dbReference type="Proteomes" id="UP000001423">
    <property type="component" value="Chromosome"/>
</dbReference>
<dbReference type="GO" id="GO:0022625">
    <property type="term" value="C:cytosolic large ribosomal subunit"/>
    <property type="evidence" value="ECO:0007669"/>
    <property type="project" value="TreeGrafter"/>
</dbReference>
<dbReference type="GO" id="GO:0003735">
    <property type="term" value="F:structural constituent of ribosome"/>
    <property type="evidence" value="ECO:0007669"/>
    <property type="project" value="InterPro"/>
</dbReference>
<dbReference type="GO" id="GO:0006412">
    <property type="term" value="P:translation"/>
    <property type="evidence" value="ECO:0007669"/>
    <property type="project" value="UniProtKB-UniRule"/>
</dbReference>
<dbReference type="CDD" id="cd00427">
    <property type="entry name" value="Ribosomal_L29_HIP"/>
    <property type="match status" value="1"/>
</dbReference>
<dbReference type="FunFam" id="1.10.287.310:FF:000001">
    <property type="entry name" value="50S ribosomal protein L29"/>
    <property type="match status" value="1"/>
</dbReference>
<dbReference type="Gene3D" id="1.10.287.310">
    <property type="match status" value="1"/>
</dbReference>
<dbReference type="HAMAP" id="MF_00374">
    <property type="entry name" value="Ribosomal_uL29"/>
    <property type="match status" value="1"/>
</dbReference>
<dbReference type="InterPro" id="IPR050063">
    <property type="entry name" value="Ribosomal_protein_uL29"/>
</dbReference>
<dbReference type="InterPro" id="IPR001854">
    <property type="entry name" value="Ribosomal_uL29"/>
</dbReference>
<dbReference type="InterPro" id="IPR036049">
    <property type="entry name" value="Ribosomal_uL29_sf"/>
</dbReference>
<dbReference type="NCBIfam" id="TIGR00012">
    <property type="entry name" value="L29"/>
    <property type="match status" value="1"/>
</dbReference>
<dbReference type="PANTHER" id="PTHR10916">
    <property type="entry name" value="60S RIBOSOMAL PROTEIN L35/50S RIBOSOMAL PROTEIN L29"/>
    <property type="match status" value="1"/>
</dbReference>
<dbReference type="PANTHER" id="PTHR10916:SF0">
    <property type="entry name" value="LARGE RIBOSOMAL SUBUNIT PROTEIN UL29C"/>
    <property type="match status" value="1"/>
</dbReference>
<dbReference type="Pfam" id="PF00831">
    <property type="entry name" value="Ribosomal_L29"/>
    <property type="match status" value="1"/>
</dbReference>
<dbReference type="SUPFAM" id="SSF46561">
    <property type="entry name" value="Ribosomal protein L29 (L29p)"/>
    <property type="match status" value="1"/>
</dbReference>
<accession>Q7V535</accession>
<comment type="similarity">
    <text evidence="1">Belongs to the universal ribosomal protein uL29 family.</text>
</comment>
<gene>
    <name evidence="1" type="primary">rpmC</name>
    <name evidence="1" type="synonym">rpl29</name>
    <name type="ordered locus">PMT_1740</name>
</gene>
<organism>
    <name type="scientific">Prochlorococcus marinus (strain MIT 9313)</name>
    <dbReference type="NCBI Taxonomy" id="74547"/>
    <lineage>
        <taxon>Bacteria</taxon>
        <taxon>Bacillati</taxon>
        <taxon>Cyanobacteriota</taxon>
        <taxon>Cyanophyceae</taxon>
        <taxon>Synechococcales</taxon>
        <taxon>Prochlorococcaceae</taxon>
        <taxon>Prochlorococcus</taxon>
    </lineage>
</organism>